<dbReference type="EC" id="6.3.4.4" evidence="2"/>
<dbReference type="EMBL" id="AM920421">
    <property type="protein sequence ID" value="CAP79170.1"/>
    <property type="molecule type" value="Genomic_DNA"/>
</dbReference>
<dbReference type="RefSeq" id="XP_002556782.1">
    <property type="nucleotide sequence ID" value="XM_002556736.1"/>
</dbReference>
<dbReference type="SMR" id="B6GWE7"/>
<dbReference type="STRING" id="500485.B6GWE7"/>
<dbReference type="GeneID" id="8313316"/>
<dbReference type="KEGG" id="pcs:N7525_010282"/>
<dbReference type="VEuPathDB" id="FungiDB:PCH_Pc06g01770"/>
<dbReference type="eggNOG" id="KOG1355">
    <property type="taxonomic scope" value="Eukaryota"/>
</dbReference>
<dbReference type="HOGENOM" id="CLU_029848_3_2_1"/>
<dbReference type="OMA" id="FHHAKPI"/>
<dbReference type="OrthoDB" id="10265645at2759"/>
<dbReference type="BioCyc" id="PCHR:PC06G01770-MONOMER"/>
<dbReference type="UniPathway" id="UPA00075">
    <property type="reaction ID" value="UER00335"/>
</dbReference>
<dbReference type="Proteomes" id="UP000000724">
    <property type="component" value="Contig Pc00c06"/>
</dbReference>
<dbReference type="GO" id="GO:0005737">
    <property type="term" value="C:cytoplasm"/>
    <property type="evidence" value="ECO:0007669"/>
    <property type="project" value="UniProtKB-SubCell"/>
</dbReference>
<dbReference type="GO" id="GO:0004019">
    <property type="term" value="F:adenylosuccinate synthase activity"/>
    <property type="evidence" value="ECO:0007669"/>
    <property type="project" value="UniProtKB-UniRule"/>
</dbReference>
<dbReference type="GO" id="GO:0005525">
    <property type="term" value="F:GTP binding"/>
    <property type="evidence" value="ECO:0007669"/>
    <property type="project" value="UniProtKB-UniRule"/>
</dbReference>
<dbReference type="GO" id="GO:0000287">
    <property type="term" value="F:magnesium ion binding"/>
    <property type="evidence" value="ECO:0007669"/>
    <property type="project" value="UniProtKB-UniRule"/>
</dbReference>
<dbReference type="GO" id="GO:0044208">
    <property type="term" value="P:'de novo' AMP biosynthetic process"/>
    <property type="evidence" value="ECO:0007669"/>
    <property type="project" value="UniProtKB-UniRule"/>
</dbReference>
<dbReference type="GO" id="GO:0046040">
    <property type="term" value="P:IMP metabolic process"/>
    <property type="evidence" value="ECO:0007669"/>
    <property type="project" value="TreeGrafter"/>
</dbReference>
<dbReference type="CDD" id="cd03108">
    <property type="entry name" value="AdSS"/>
    <property type="match status" value="1"/>
</dbReference>
<dbReference type="FunFam" id="1.10.300.10:FF:000001">
    <property type="entry name" value="Adenylosuccinate synthetase"/>
    <property type="match status" value="1"/>
</dbReference>
<dbReference type="FunFam" id="3.90.170.10:FF:000001">
    <property type="entry name" value="Adenylosuccinate synthetase"/>
    <property type="match status" value="1"/>
</dbReference>
<dbReference type="Gene3D" id="3.40.440.10">
    <property type="entry name" value="Adenylosuccinate Synthetase, subunit A, domain 1"/>
    <property type="match status" value="1"/>
</dbReference>
<dbReference type="Gene3D" id="1.10.300.10">
    <property type="entry name" value="Adenylosuccinate Synthetase, subunit A, domain 2"/>
    <property type="match status" value="1"/>
</dbReference>
<dbReference type="Gene3D" id="3.90.170.10">
    <property type="entry name" value="Adenylosuccinate Synthetase, subunit A, domain 3"/>
    <property type="match status" value="1"/>
</dbReference>
<dbReference type="HAMAP" id="MF_00011">
    <property type="entry name" value="Adenylosucc_synth"/>
    <property type="match status" value="1"/>
</dbReference>
<dbReference type="InterPro" id="IPR018220">
    <property type="entry name" value="Adenylosuccin_syn_GTP-bd"/>
</dbReference>
<dbReference type="InterPro" id="IPR033128">
    <property type="entry name" value="Adenylosuccin_syn_Lys_AS"/>
</dbReference>
<dbReference type="InterPro" id="IPR042109">
    <property type="entry name" value="Adenylosuccinate_synth_dom1"/>
</dbReference>
<dbReference type="InterPro" id="IPR042110">
    <property type="entry name" value="Adenylosuccinate_synth_dom2"/>
</dbReference>
<dbReference type="InterPro" id="IPR042111">
    <property type="entry name" value="Adenylosuccinate_synth_dom3"/>
</dbReference>
<dbReference type="InterPro" id="IPR001114">
    <property type="entry name" value="Adenylosuccinate_synthetase"/>
</dbReference>
<dbReference type="InterPro" id="IPR027417">
    <property type="entry name" value="P-loop_NTPase"/>
</dbReference>
<dbReference type="NCBIfam" id="NF002223">
    <property type="entry name" value="PRK01117.1"/>
    <property type="match status" value="1"/>
</dbReference>
<dbReference type="NCBIfam" id="TIGR00184">
    <property type="entry name" value="purA"/>
    <property type="match status" value="1"/>
</dbReference>
<dbReference type="PANTHER" id="PTHR11846">
    <property type="entry name" value="ADENYLOSUCCINATE SYNTHETASE"/>
    <property type="match status" value="1"/>
</dbReference>
<dbReference type="PANTHER" id="PTHR11846:SF0">
    <property type="entry name" value="ADENYLOSUCCINATE SYNTHETASE"/>
    <property type="match status" value="1"/>
</dbReference>
<dbReference type="Pfam" id="PF00709">
    <property type="entry name" value="Adenylsucc_synt"/>
    <property type="match status" value="1"/>
</dbReference>
<dbReference type="SMART" id="SM00788">
    <property type="entry name" value="Adenylsucc_synt"/>
    <property type="match status" value="1"/>
</dbReference>
<dbReference type="SUPFAM" id="SSF52540">
    <property type="entry name" value="P-loop containing nucleoside triphosphate hydrolases"/>
    <property type="match status" value="1"/>
</dbReference>
<dbReference type="PROSITE" id="PS01266">
    <property type="entry name" value="ADENYLOSUCCIN_SYN_1"/>
    <property type="match status" value="1"/>
</dbReference>
<dbReference type="PROSITE" id="PS00513">
    <property type="entry name" value="ADENYLOSUCCIN_SYN_2"/>
    <property type="match status" value="1"/>
</dbReference>
<reference key="1">
    <citation type="journal article" date="2008" name="Nat. Biotechnol.">
        <title>Genome sequencing and analysis of the filamentous fungus Penicillium chrysogenum.</title>
        <authorList>
            <person name="van den Berg M.A."/>
            <person name="Albang R."/>
            <person name="Albermann K."/>
            <person name="Badger J.H."/>
            <person name="Daran J.-M."/>
            <person name="Driessen A.J.M."/>
            <person name="Garcia-Estrada C."/>
            <person name="Fedorova N.D."/>
            <person name="Harris D.M."/>
            <person name="Heijne W.H.M."/>
            <person name="Joardar V.S."/>
            <person name="Kiel J.A.K.W."/>
            <person name="Kovalchuk A."/>
            <person name="Martin J.F."/>
            <person name="Nierman W.C."/>
            <person name="Nijland J.G."/>
            <person name="Pronk J.T."/>
            <person name="Roubos J.A."/>
            <person name="van der Klei I.J."/>
            <person name="van Peij N.N.M.E."/>
            <person name="Veenhuis M."/>
            <person name="von Doehren H."/>
            <person name="Wagner C."/>
            <person name="Wortman J.R."/>
            <person name="Bovenberg R.A.L."/>
        </authorList>
    </citation>
    <scope>NUCLEOTIDE SEQUENCE [LARGE SCALE GENOMIC DNA]</scope>
    <source>
        <strain>ATCC 28089 / DSM 1075 / NRRL 1951 / Wisconsin 54-1255</strain>
    </source>
</reference>
<keyword id="KW-0963">Cytoplasm</keyword>
<keyword id="KW-0342">GTP-binding</keyword>
<keyword id="KW-0436">Ligase</keyword>
<keyword id="KW-0460">Magnesium</keyword>
<keyword id="KW-0479">Metal-binding</keyword>
<keyword id="KW-0547">Nucleotide-binding</keyword>
<keyword id="KW-0658">Purine biosynthesis</keyword>
<keyword id="KW-1185">Reference proteome</keyword>
<proteinExistence type="inferred from homology"/>
<name>PURA_PENRW</name>
<evidence type="ECO:0000250" key="1"/>
<evidence type="ECO:0000255" key="2">
    <source>
        <dbReference type="HAMAP-Rule" id="MF_03125"/>
    </source>
</evidence>
<sequence>MVSIVLGSQWGDEGKGKITDMLSQDATLCCRAAGGHNAGHTIVHEDVTYDFHILPSGLVSPKCINLIGAGTVFHVPSFFKELAAIEAKGLKGAAQRIFVSDRAHVCFDLHSVVDGLEEKGLGGRKVGTTGKGIGPCYSDKAARRGVRVGEILDEETFERKLRTLDTSYRTRFGDLAYDVEEEIARFKEYRNLLKPHIVDQLEFLQEHKNSPNTLVEGANALMLDLDHGTYPFVTSSSTGLGGAVQALALNPASIKSVIGVVKAYTTRVGSGPFPSEQLNGDGEKLQQVGREFGVTTGRRRRCGWLDLVLCRYSHAINHYTALNLTKLDILDDFDEIKVGVAYILPDGKRTTGTFPADPNVVDKIQVEYVTLPGWKSNTMGVKRYEDLPPNARAYIEFIEREIGGVPVKWIGTGPARDHMIARD</sequence>
<accession>B6GWE7</accession>
<protein>
    <recommendedName>
        <fullName evidence="2">Adenylosuccinate synthetase</fullName>
        <shortName evidence="2">AMPSase</shortName>
        <shortName evidence="2">AdSS</shortName>
        <ecNumber evidence="2">6.3.4.4</ecNumber>
    </recommendedName>
    <alternativeName>
        <fullName evidence="2">IMP--aspartate ligase</fullName>
    </alternativeName>
</protein>
<comment type="function">
    <text evidence="1">Plays an important role in the de novo pathway and in the salvage pathway of purine nucleotide biosynthesis. Catalyzes the first committed step in the biosynthesis of AMP from IMP (By similarity).</text>
</comment>
<comment type="catalytic activity">
    <reaction evidence="2">
        <text>IMP + L-aspartate + GTP = N(6)-(1,2-dicarboxyethyl)-AMP + GDP + phosphate + 2 H(+)</text>
        <dbReference type="Rhea" id="RHEA:15753"/>
        <dbReference type="ChEBI" id="CHEBI:15378"/>
        <dbReference type="ChEBI" id="CHEBI:29991"/>
        <dbReference type="ChEBI" id="CHEBI:37565"/>
        <dbReference type="ChEBI" id="CHEBI:43474"/>
        <dbReference type="ChEBI" id="CHEBI:57567"/>
        <dbReference type="ChEBI" id="CHEBI:58053"/>
        <dbReference type="ChEBI" id="CHEBI:58189"/>
        <dbReference type="EC" id="6.3.4.4"/>
    </reaction>
</comment>
<comment type="cofactor">
    <cofactor evidence="2">
        <name>Mg(2+)</name>
        <dbReference type="ChEBI" id="CHEBI:18420"/>
    </cofactor>
    <text evidence="2">Binds 1 Mg(2+) ion per subunit.</text>
</comment>
<comment type="pathway">
    <text evidence="2">Purine metabolism; AMP biosynthesis via de novo pathway; AMP from IMP: step 1/2.</text>
</comment>
<comment type="subunit">
    <text evidence="2">Homodimer.</text>
</comment>
<comment type="subcellular location">
    <subcellularLocation>
        <location evidence="2">Cytoplasm</location>
    </subcellularLocation>
</comment>
<comment type="similarity">
    <text evidence="2">Belongs to the adenylosuccinate synthetase family.</text>
</comment>
<feature type="chain" id="PRO_0000399351" description="Adenylosuccinate synthetase">
    <location>
        <begin position="1"/>
        <end position="423"/>
    </location>
</feature>
<feature type="active site" description="Proton acceptor" evidence="2">
    <location>
        <position position="12"/>
    </location>
</feature>
<feature type="active site" description="Proton donor" evidence="2">
    <location>
        <position position="40"/>
    </location>
</feature>
<feature type="binding site" evidence="2">
    <location>
        <begin position="11"/>
        <end position="17"/>
    </location>
    <ligand>
        <name>GTP</name>
        <dbReference type="ChEBI" id="CHEBI:37565"/>
    </ligand>
</feature>
<feature type="binding site" description="in other chain" evidence="2">
    <location>
        <begin position="12"/>
        <end position="15"/>
    </location>
    <ligand>
        <name>IMP</name>
        <dbReference type="ChEBI" id="CHEBI:58053"/>
        <note>ligand shared between dimeric partners</note>
    </ligand>
</feature>
<feature type="binding site" evidence="2">
    <location>
        <position position="12"/>
    </location>
    <ligand>
        <name>Mg(2+)</name>
        <dbReference type="ChEBI" id="CHEBI:18420"/>
    </ligand>
</feature>
<feature type="binding site" description="in other chain" evidence="2">
    <location>
        <begin position="37"/>
        <end position="40"/>
    </location>
    <ligand>
        <name>IMP</name>
        <dbReference type="ChEBI" id="CHEBI:58053"/>
        <note>ligand shared between dimeric partners</note>
    </ligand>
</feature>
<feature type="binding site" evidence="2">
    <location>
        <begin position="39"/>
        <end position="41"/>
    </location>
    <ligand>
        <name>GTP</name>
        <dbReference type="ChEBI" id="CHEBI:37565"/>
    </ligand>
</feature>
<feature type="binding site" evidence="2">
    <location>
        <position position="39"/>
    </location>
    <ligand>
        <name>Mg(2+)</name>
        <dbReference type="ChEBI" id="CHEBI:18420"/>
    </ligand>
</feature>
<feature type="binding site" description="in other chain" evidence="2">
    <location>
        <position position="129"/>
    </location>
    <ligand>
        <name>IMP</name>
        <dbReference type="ChEBI" id="CHEBI:58053"/>
        <note>ligand shared between dimeric partners</note>
    </ligand>
</feature>
<feature type="binding site" evidence="2">
    <location>
        <position position="143"/>
    </location>
    <ligand>
        <name>IMP</name>
        <dbReference type="ChEBI" id="CHEBI:58053"/>
        <note>ligand shared between dimeric partners</note>
    </ligand>
</feature>
<feature type="binding site" description="in other chain" evidence="2">
    <location>
        <position position="219"/>
    </location>
    <ligand>
        <name>IMP</name>
        <dbReference type="ChEBI" id="CHEBI:58053"/>
        <note>ligand shared between dimeric partners</note>
    </ligand>
</feature>
<feature type="binding site" description="in other chain" evidence="2">
    <location>
        <position position="234"/>
    </location>
    <ligand>
        <name>IMP</name>
        <dbReference type="ChEBI" id="CHEBI:58053"/>
        <note>ligand shared between dimeric partners</note>
    </ligand>
</feature>
<feature type="binding site" evidence="2">
    <location>
        <begin position="294"/>
        <end position="300"/>
    </location>
    <ligand>
        <name>substrate</name>
    </ligand>
</feature>
<feature type="binding site" description="in other chain" evidence="2">
    <location>
        <position position="298"/>
    </location>
    <ligand>
        <name>IMP</name>
        <dbReference type="ChEBI" id="CHEBI:58053"/>
        <note>ligand shared between dimeric partners</note>
    </ligand>
</feature>
<feature type="binding site" evidence="2">
    <location>
        <position position="300"/>
    </location>
    <ligand>
        <name>GTP</name>
        <dbReference type="ChEBI" id="CHEBI:37565"/>
    </ligand>
</feature>
<feature type="binding site" evidence="2">
    <location>
        <begin position="326"/>
        <end position="328"/>
    </location>
    <ligand>
        <name>GTP</name>
        <dbReference type="ChEBI" id="CHEBI:37565"/>
    </ligand>
</feature>
<feature type="binding site" evidence="2">
    <location>
        <begin position="411"/>
        <end position="413"/>
    </location>
    <ligand>
        <name>GTP</name>
        <dbReference type="ChEBI" id="CHEBI:37565"/>
    </ligand>
</feature>
<organism>
    <name type="scientific">Penicillium rubens (strain ATCC 28089 / DSM 1075 / NRRL 1951 / Wisconsin 54-1255)</name>
    <name type="common">Penicillium chrysogenum</name>
    <dbReference type="NCBI Taxonomy" id="500485"/>
    <lineage>
        <taxon>Eukaryota</taxon>
        <taxon>Fungi</taxon>
        <taxon>Dikarya</taxon>
        <taxon>Ascomycota</taxon>
        <taxon>Pezizomycotina</taxon>
        <taxon>Eurotiomycetes</taxon>
        <taxon>Eurotiomycetidae</taxon>
        <taxon>Eurotiales</taxon>
        <taxon>Aspergillaceae</taxon>
        <taxon>Penicillium</taxon>
        <taxon>Penicillium chrysogenum species complex</taxon>
    </lineage>
</organism>
<gene>
    <name type="ORF">Pc06g01770</name>
</gene>